<protein>
    <recommendedName>
        <fullName evidence="1">Large ribosomal subunit protein bL25</fullName>
    </recommendedName>
    <alternativeName>
        <fullName evidence="2">50S ribosomal protein L25</fullName>
    </alternativeName>
</protein>
<gene>
    <name evidence="1" type="primary">rplY</name>
    <name type="ordered locus">SF2272</name>
    <name type="ordered locus">S2401</name>
</gene>
<accession>P68918</accession>
<accession>P02426</accession>
<organism>
    <name type="scientific">Shigella flexneri</name>
    <dbReference type="NCBI Taxonomy" id="623"/>
    <lineage>
        <taxon>Bacteria</taxon>
        <taxon>Pseudomonadati</taxon>
        <taxon>Pseudomonadota</taxon>
        <taxon>Gammaproteobacteria</taxon>
        <taxon>Enterobacterales</taxon>
        <taxon>Enterobacteriaceae</taxon>
        <taxon>Shigella</taxon>
    </lineage>
</organism>
<sequence>MFTINAEVRKEQGKGASRRLRAANKFPAIIYGGKEAPLAIELDHDKVMNMQAKAEFYSEVLTIVVDGKEIKVKAQDVQRHPYKPKLQHIDFVRA</sequence>
<proteinExistence type="evidence at protein level"/>
<dbReference type="EMBL" id="AE005674">
    <property type="protein sequence ID" value="AAN43791.2"/>
    <property type="molecule type" value="Genomic_DNA"/>
</dbReference>
<dbReference type="EMBL" id="AE014073">
    <property type="protein sequence ID" value="AAP17608.1"/>
    <property type="molecule type" value="Genomic_DNA"/>
</dbReference>
<dbReference type="RefSeq" id="NP_708084.2">
    <property type="nucleotide sequence ID" value="NC_004337.2"/>
</dbReference>
<dbReference type="RefSeq" id="WP_000494183.1">
    <property type="nucleotide sequence ID" value="NZ_WPGW01000022.1"/>
</dbReference>
<dbReference type="PDB" id="4V42">
    <property type="method" value="X-ray"/>
    <property type="resolution" value="5.50 A"/>
    <property type="chains" value="BV=1-94"/>
</dbReference>
<dbReference type="PDBsum" id="4V42"/>
<dbReference type="SMR" id="P68918"/>
<dbReference type="IntAct" id="P68918">
    <property type="interactions" value="1"/>
</dbReference>
<dbReference type="STRING" id="198214.SF2272"/>
<dbReference type="PaxDb" id="198214-SF2272"/>
<dbReference type="GeneID" id="1027312"/>
<dbReference type="GeneID" id="93774996"/>
<dbReference type="KEGG" id="sfl:SF2272"/>
<dbReference type="KEGG" id="sfx:S2401"/>
<dbReference type="PATRIC" id="fig|198214.7.peg.2721"/>
<dbReference type="HOGENOM" id="CLU_137946_0_0_6"/>
<dbReference type="Proteomes" id="UP000001006">
    <property type="component" value="Chromosome"/>
</dbReference>
<dbReference type="Proteomes" id="UP000002673">
    <property type="component" value="Chromosome"/>
</dbReference>
<dbReference type="GO" id="GO:0022625">
    <property type="term" value="C:cytosolic large ribosomal subunit"/>
    <property type="evidence" value="ECO:0007669"/>
    <property type="project" value="TreeGrafter"/>
</dbReference>
<dbReference type="GO" id="GO:0008097">
    <property type="term" value="F:5S rRNA binding"/>
    <property type="evidence" value="ECO:0007669"/>
    <property type="project" value="InterPro"/>
</dbReference>
<dbReference type="GO" id="GO:0003735">
    <property type="term" value="F:structural constituent of ribosome"/>
    <property type="evidence" value="ECO:0007669"/>
    <property type="project" value="InterPro"/>
</dbReference>
<dbReference type="GO" id="GO:0006412">
    <property type="term" value="P:translation"/>
    <property type="evidence" value="ECO:0007669"/>
    <property type="project" value="UniProtKB-UniRule"/>
</dbReference>
<dbReference type="CDD" id="cd00495">
    <property type="entry name" value="Ribosomal_L25_TL5_CTC"/>
    <property type="match status" value="1"/>
</dbReference>
<dbReference type="FunFam" id="2.40.240.10:FF:000002">
    <property type="entry name" value="50S ribosomal protein L25"/>
    <property type="match status" value="1"/>
</dbReference>
<dbReference type="Gene3D" id="2.40.240.10">
    <property type="entry name" value="Ribosomal Protein L25, Chain P"/>
    <property type="match status" value="1"/>
</dbReference>
<dbReference type="HAMAP" id="MF_01336">
    <property type="entry name" value="Ribosomal_bL25"/>
    <property type="match status" value="1"/>
</dbReference>
<dbReference type="InterPro" id="IPR020056">
    <property type="entry name" value="Rbsml_bL25/Gln-tRNA_synth_N"/>
</dbReference>
<dbReference type="InterPro" id="IPR011035">
    <property type="entry name" value="Ribosomal_bL25/Gln-tRNA_synth"/>
</dbReference>
<dbReference type="InterPro" id="IPR020055">
    <property type="entry name" value="Ribosomal_bL25_short"/>
</dbReference>
<dbReference type="InterPro" id="IPR029751">
    <property type="entry name" value="Ribosomal_L25_dom"/>
</dbReference>
<dbReference type="InterPro" id="IPR020930">
    <property type="entry name" value="Ribosomal_uL5_bac-type"/>
</dbReference>
<dbReference type="NCBIfam" id="NF004612">
    <property type="entry name" value="PRK05943.1"/>
    <property type="match status" value="1"/>
</dbReference>
<dbReference type="PANTHER" id="PTHR33284">
    <property type="entry name" value="RIBOSOMAL PROTEIN L25/GLN-TRNA SYNTHETASE, ANTI-CODON-BINDING DOMAIN-CONTAINING PROTEIN"/>
    <property type="match status" value="1"/>
</dbReference>
<dbReference type="PANTHER" id="PTHR33284:SF1">
    <property type="entry name" value="RIBOSOMAL PROTEIN L25_GLN-TRNA SYNTHETASE, ANTI-CODON-BINDING DOMAIN-CONTAINING PROTEIN"/>
    <property type="match status" value="1"/>
</dbReference>
<dbReference type="Pfam" id="PF01386">
    <property type="entry name" value="Ribosomal_L25p"/>
    <property type="match status" value="1"/>
</dbReference>
<dbReference type="SUPFAM" id="SSF50715">
    <property type="entry name" value="Ribosomal protein L25-like"/>
    <property type="match status" value="1"/>
</dbReference>
<reference key="1">
    <citation type="journal article" date="2002" name="Nucleic Acids Res.">
        <title>Genome sequence of Shigella flexneri 2a: insights into pathogenicity through comparison with genomes of Escherichia coli K12 and O157.</title>
        <authorList>
            <person name="Jin Q."/>
            <person name="Yuan Z."/>
            <person name="Xu J."/>
            <person name="Wang Y."/>
            <person name="Shen Y."/>
            <person name="Lu W."/>
            <person name="Wang J."/>
            <person name="Liu H."/>
            <person name="Yang J."/>
            <person name="Yang F."/>
            <person name="Zhang X."/>
            <person name="Zhang J."/>
            <person name="Yang G."/>
            <person name="Wu H."/>
            <person name="Qu D."/>
            <person name="Dong J."/>
            <person name="Sun L."/>
            <person name="Xue Y."/>
            <person name="Zhao A."/>
            <person name="Gao Y."/>
            <person name="Zhu J."/>
            <person name="Kan B."/>
            <person name="Ding K."/>
            <person name="Chen S."/>
            <person name="Cheng H."/>
            <person name="Yao Z."/>
            <person name="He B."/>
            <person name="Chen R."/>
            <person name="Ma D."/>
            <person name="Qiang B."/>
            <person name="Wen Y."/>
            <person name="Hou Y."/>
            <person name="Yu J."/>
        </authorList>
    </citation>
    <scope>NUCLEOTIDE SEQUENCE [LARGE SCALE GENOMIC DNA]</scope>
    <source>
        <strain>301 / Serotype 2a</strain>
    </source>
</reference>
<reference key="2">
    <citation type="journal article" date="2003" name="Infect. Immun.">
        <title>Complete genome sequence and comparative genomics of Shigella flexneri serotype 2a strain 2457T.</title>
        <authorList>
            <person name="Wei J."/>
            <person name="Goldberg M.B."/>
            <person name="Burland V."/>
            <person name="Venkatesan M.M."/>
            <person name="Deng W."/>
            <person name="Fournier G."/>
            <person name="Mayhew G.F."/>
            <person name="Plunkett G. III"/>
            <person name="Rose D.J."/>
            <person name="Darling A."/>
            <person name="Mau B."/>
            <person name="Perna N.T."/>
            <person name="Payne S.M."/>
            <person name="Runyen-Janecky L.J."/>
            <person name="Zhou S."/>
            <person name="Schwartz D.C."/>
            <person name="Blattner F.R."/>
        </authorList>
    </citation>
    <scope>NUCLEOTIDE SEQUENCE [LARGE SCALE GENOMIC DNA]</scope>
    <source>
        <strain>ATCC 700930 / 2457T / Serotype 2a</strain>
    </source>
</reference>
<feature type="chain" id="PRO_0000181495" description="Large ribosomal subunit protein bL25">
    <location>
        <begin position="1"/>
        <end position="94"/>
    </location>
</feature>
<name>RL25_SHIFL</name>
<keyword id="KW-0002">3D-structure</keyword>
<keyword id="KW-1185">Reference proteome</keyword>
<keyword id="KW-0687">Ribonucleoprotein</keyword>
<keyword id="KW-0689">Ribosomal protein</keyword>
<keyword id="KW-0694">RNA-binding</keyword>
<keyword id="KW-0699">rRNA-binding</keyword>
<evidence type="ECO:0000255" key="1">
    <source>
        <dbReference type="HAMAP-Rule" id="MF_01336"/>
    </source>
</evidence>
<evidence type="ECO:0000305" key="2"/>
<comment type="function">
    <text evidence="1">This is one of the proteins that binds to the 5S RNA in the ribosome where it forms part of the central protuberance.</text>
</comment>
<comment type="subunit">
    <text evidence="1">Part of the 50S ribosomal subunit; part of the 5S rRNA/L5/L18/L25 subcomplex. Contacts the 5S rRNA. Binds to the 5S rRNA independently of L5 and L18.</text>
</comment>
<comment type="similarity">
    <text evidence="1">Belongs to the bacterial ribosomal protein bL25 family.</text>
</comment>